<sequence length="228" mass="25023">MASGCKIGPSILNSDLANLGAKCLQMLDSGADYLHLDVMDGHFVPNITFGHPVVESLRKQLGQDPFFDMHMMVSKPEQWVKPMAVAEANQYTFHLEATENPGTLIKDIRENGMKVGLAIKPGTSVEYLAPWANQIDMALVMTVEPGFGEQKFMEDMMPKVHWLRTQFPSLDIEGDGGVGSDTVHKCAEAGANMTVSGSAIMRSEDPRSVINLLRNICSEAAQKRSLDR</sequence>
<protein>
    <recommendedName>
        <fullName>Ribulose-phosphate 3-epimerase-like protein 1</fullName>
        <ecNumber evidence="2">5.1.3.1</ecNumber>
    </recommendedName>
    <alternativeName>
        <fullName>Ribulose-5-phosphate-3-epimerase-like protein 1</fullName>
    </alternativeName>
</protein>
<name>RPEL1_HUMAN</name>
<keyword id="KW-0119">Carbohydrate metabolism</keyword>
<keyword id="KW-0170">Cobalt</keyword>
<keyword id="KW-0408">Iron</keyword>
<keyword id="KW-0413">Isomerase</keyword>
<keyword id="KW-0464">Manganese</keyword>
<keyword id="KW-0479">Metal-binding</keyword>
<keyword id="KW-1267">Proteomics identification</keyword>
<keyword id="KW-1185">Reference proteome</keyword>
<keyword id="KW-0862">Zinc</keyword>
<accession>Q2QD12</accession>
<organism>
    <name type="scientific">Homo sapiens</name>
    <name type="common">Human</name>
    <dbReference type="NCBI Taxonomy" id="9606"/>
    <lineage>
        <taxon>Eukaryota</taxon>
        <taxon>Metazoa</taxon>
        <taxon>Chordata</taxon>
        <taxon>Craniata</taxon>
        <taxon>Vertebrata</taxon>
        <taxon>Euteleostomi</taxon>
        <taxon>Mammalia</taxon>
        <taxon>Eutheria</taxon>
        <taxon>Euarchontoglires</taxon>
        <taxon>Primates</taxon>
        <taxon>Haplorrhini</taxon>
        <taxon>Catarrhini</taxon>
        <taxon>Hominidae</taxon>
        <taxon>Homo</taxon>
    </lineage>
</organism>
<evidence type="ECO:0000250" key="1">
    <source>
        <dbReference type="UniProtKB" id="P32719"/>
    </source>
</evidence>
<evidence type="ECO:0000250" key="2">
    <source>
        <dbReference type="UniProtKB" id="Q96AT9"/>
    </source>
</evidence>
<evidence type="ECO:0000305" key="3"/>
<evidence type="ECO:0000305" key="4">
    <source>
    </source>
</evidence>
<dbReference type="EC" id="5.1.3.1" evidence="2"/>
<dbReference type="EMBL" id="DQ120706">
    <property type="protein sequence ID" value="ABC40667.1"/>
    <property type="molecule type" value="Genomic_DNA"/>
</dbReference>
<dbReference type="EMBL" id="AL360001">
    <property type="status" value="NOT_ANNOTATED_CDS"/>
    <property type="molecule type" value="Genomic_DNA"/>
</dbReference>
<dbReference type="EMBL" id="CH471066">
    <property type="protein sequence ID" value="EAW49655.1"/>
    <property type="molecule type" value="Genomic_DNA"/>
</dbReference>
<dbReference type="EMBL" id="BC137242">
    <property type="protein sequence ID" value="AAI37243.1"/>
    <property type="molecule type" value="mRNA"/>
</dbReference>
<dbReference type="EMBL" id="BC137243">
    <property type="protein sequence ID" value="AAI37244.1"/>
    <property type="molecule type" value="mRNA"/>
</dbReference>
<dbReference type="EMBL" id="BC157829">
    <property type="protein sequence ID" value="AAI57830.1"/>
    <property type="molecule type" value="mRNA"/>
</dbReference>
<dbReference type="EMBL" id="BC157875">
    <property type="protein sequence ID" value="AAI57876.1"/>
    <property type="molecule type" value="mRNA"/>
</dbReference>
<dbReference type="EMBL" id="BC171806">
    <property type="protein sequence ID" value="AAI71806.1"/>
    <property type="molecule type" value="mRNA"/>
</dbReference>
<dbReference type="EMBL" id="BC171885">
    <property type="protein sequence ID" value="AAI71885.1"/>
    <property type="molecule type" value="mRNA"/>
</dbReference>
<dbReference type="CCDS" id="CCDS65929.1"/>
<dbReference type="RefSeq" id="NP_001137381.1">
    <property type="nucleotide sequence ID" value="NM_001143909.1"/>
</dbReference>
<dbReference type="SMR" id="Q2QD12"/>
<dbReference type="BioGRID" id="609427">
    <property type="interactions" value="5"/>
</dbReference>
<dbReference type="FunCoup" id="Q2QD12">
    <property type="interactions" value="556"/>
</dbReference>
<dbReference type="IntAct" id="Q2QD12">
    <property type="interactions" value="4"/>
</dbReference>
<dbReference type="STRING" id="9606.ENSP00000476672"/>
<dbReference type="GlyGen" id="Q2QD12">
    <property type="glycosylation" value="2 sites, 1 O-linked glycan (2 sites)"/>
</dbReference>
<dbReference type="iPTMnet" id="Q2QD12"/>
<dbReference type="PhosphoSitePlus" id="Q2QD12"/>
<dbReference type="BioMuta" id="RPEL1"/>
<dbReference type="jPOST" id="Q2QD12"/>
<dbReference type="MassIVE" id="Q2QD12"/>
<dbReference type="PaxDb" id="9606-ENSP00000476672"/>
<dbReference type="PeptideAtlas" id="Q2QD12"/>
<dbReference type="Antibodypedia" id="71379">
    <property type="antibodies" value="28 antibodies from 14 providers"/>
</dbReference>
<dbReference type="DNASU" id="729020"/>
<dbReference type="Ensembl" id="ENST00000441178.2">
    <property type="protein sequence ID" value="ENSP00000476672.1"/>
    <property type="gene ID" value="ENSG00000235376.5"/>
</dbReference>
<dbReference type="GeneID" id="729020"/>
<dbReference type="KEGG" id="hsa:729020"/>
<dbReference type="MANE-Select" id="ENST00000441178.2">
    <property type="protein sequence ID" value="ENSP00000476672.1"/>
    <property type="RefSeq nucleotide sequence ID" value="NM_001143909.1"/>
    <property type="RefSeq protein sequence ID" value="NP_001137381.1"/>
</dbReference>
<dbReference type="UCSC" id="uc009xxi.2">
    <property type="organism name" value="human"/>
</dbReference>
<dbReference type="AGR" id="HGNC:45241"/>
<dbReference type="CTD" id="729020"/>
<dbReference type="GeneCards" id="RPEL1"/>
<dbReference type="HGNC" id="HGNC:45241">
    <property type="gene designation" value="RPEL1"/>
</dbReference>
<dbReference type="HPA" id="ENSG00000235376">
    <property type="expression patterns" value="Not detected"/>
</dbReference>
<dbReference type="neXtProt" id="NX_Q2QD12"/>
<dbReference type="OpenTargets" id="ENSG00000235376"/>
<dbReference type="VEuPathDB" id="HostDB:ENSG00000235376"/>
<dbReference type="eggNOG" id="KOG3111">
    <property type="taxonomic scope" value="Eukaryota"/>
</dbReference>
<dbReference type="GeneTree" id="ENSGT00390000001447"/>
<dbReference type="HOGENOM" id="CLU_054856_0_1_1"/>
<dbReference type="InParanoid" id="Q2QD12"/>
<dbReference type="OMA" id="SDTVHKC"/>
<dbReference type="OrthoDB" id="1927044at2759"/>
<dbReference type="PAN-GO" id="Q2QD12">
    <property type="GO annotations" value="5 GO annotations based on evolutionary models"/>
</dbReference>
<dbReference type="PathwayCommons" id="Q2QD12"/>
<dbReference type="Reactome" id="R-HSA-71336">
    <property type="pathway name" value="Pentose phosphate pathway"/>
</dbReference>
<dbReference type="SignaLink" id="Q2QD12"/>
<dbReference type="SIGNOR" id="Q2QD12"/>
<dbReference type="BioGRID-ORCS" id="729020">
    <property type="hits" value="30 hits in 1013 CRISPR screens"/>
</dbReference>
<dbReference type="GenomeRNAi" id="729020"/>
<dbReference type="Pharos" id="Q2QD12">
    <property type="development level" value="Tbio"/>
</dbReference>
<dbReference type="PRO" id="PR:Q2QD12"/>
<dbReference type="Proteomes" id="UP000005640">
    <property type="component" value="Chromosome 10"/>
</dbReference>
<dbReference type="RNAct" id="Q2QD12">
    <property type="molecule type" value="protein"/>
</dbReference>
<dbReference type="Bgee" id="ENSG00000235376">
    <property type="expression patterns" value="Expressed in male germ line stem cell (sensu Vertebrata) in testis and 3 other cell types or tissues"/>
</dbReference>
<dbReference type="GO" id="GO:0005829">
    <property type="term" value="C:cytosol"/>
    <property type="evidence" value="ECO:0000318"/>
    <property type="project" value="GO_Central"/>
</dbReference>
<dbReference type="GO" id="GO:0004750">
    <property type="term" value="F:D-ribulose-phosphate 3-epimerase activity"/>
    <property type="evidence" value="ECO:0000318"/>
    <property type="project" value="GO_Central"/>
</dbReference>
<dbReference type="GO" id="GO:0046872">
    <property type="term" value="F:metal ion binding"/>
    <property type="evidence" value="ECO:0000318"/>
    <property type="project" value="GO_Central"/>
</dbReference>
<dbReference type="GO" id="GO:0005975">
    <property type="term" value="P:carbohydrate metabolic process"/>
    <property type="evidence" value="ECO:0000318"/>
    <property type="project" value="GO_Central"/>
</dbReference>
<dbReference type="GO" id="GO:0009052">
    <property type="term" value="P:pentose-phosphate shunt, non-oxidative branch"/>
    <property type="evidence" value="ECO:0000318"/>
    <property type="project" value="GO_Central"/>
</dbReference>
<dbReference type="CDD" id="cd00429">
    <property type="entry name" value="RPE"/>
    <property type="match status" value="1"/>
</dbReference>
<dbReference type="FunFam" id="3.20.20.70:FF:000191">
    <property type="entry name" value="ribulose-phosphate 3-epimerase isoform X2"/>
    <property type="match status" value="1"/>
</dbReference>
<dbReference type="Gene3D" id="3.20.20.70">
    <property type="entry name" value="Aldolase class I"/>
    <property type="match status" value="1"/>
</dbReference>
<dbReference type="HAMAP" id="MF_02227">
    <property type="entry name" value="RPE"/>
    <property type="match status" value="1"/>
</dbReference>
<dbReference type="InterPro" id="IPR013785">
    <property type="entry name" value="Aldolase_TIM"/>
</dbReference>
<dbReference type="InterPro" id="IPR026019">
    <property type="entry name" value="Ribul_P_3_epim"/>
</dbReference>
<dbReference type="InterPro" id="IPR000056">
    <property type="entry name" value="Ribul_P_3_epim-like"/>
</dbReference>
<dbReference type="InterPro" id="IPR011060">
    <property type="entry name" value="RibuloseP-bd_barrel"/>
</dbReference>
<dbReference type="NCBIfam" id="NF004076">
    <property type="entry name" value="PRK05581.1-4"/>
    <property type="match status" value="1"/>
</dbReference>
<dbReference type="PANTHER" id="PTHR11749">
    <property type="entry name" value="RIBULOSE-5-PHOSPHATE-3-EPIMERASE"/>
    <property type="match status" value="1"/>
</dbReference>
<dbReference type="Pfam" id="PF00834">
    <property type="entry name" value="Ribul_P_3_epim"/>
    <property type="match status" value="1"/>
</dbReference>
<dbReference type="PIRSF" id="PIRSF001461">
    <property type="entry name" value="RPE"/>
    <property type="match status" value="1"/>
</dbReference>
<dbReference type="SUPFAM" id="SSF51366">
    <property type="entry name" value="Ribulose-phoshate binding barrel"/>
    <property type="match status" value="1"/>
</dbReference>
<dbReference type="PROSITE" id="PS01085">
    <property type="entry name" value="RIBUL_P_3_EPIMER_1"/>
    <property type="match status" value="1"/>
</dbReference>
<comment type="function">
    <text evidence="2">Catalyzes the reversible epimerization of D-ribulose 5-phosphate to D-xylulose 5-phosphate.</text>
</comment>
<comment type="catalytic activity">
    <reaction evidence="2">
        <text>D-ribulose 5-phosphate = D-xylulose 5-phosphate</text>
        <dbReference type="Rhea" id="RHEA:13677"/>
        <dbReference type="ChEBI" id="CHEBI:57737"/>
        <dbReference type="ChEBI" id="CHEBI:58121"/>
        <dbReference type="EC" id="5.1.3.1"/>
    </reaction>
</comment>
<comment type="cofactor">
    <cofactor evidence="2">
        <name>Fe(2+)</name>
        <dbReference type="ChEBI" id="CHEBI:29033"/>
    </cofactor>
    <cofactor evidence="2">
        <name>Mn(2+)</name>
        <dbReference type="ChEBI" id="CHEBI:29035"/>
    </cofactor>
    <cofactor evidence="2">
        <name>Zn(2+)</name>
        <dbReference type="ChEBI" id="CHEBI:29105"/>
    </cofactor>
    <cofactor evidence="2">
        <name>Co(2+)</name>
        <dbReference type="ChEBI" id="CHEBI:48828"/>
    </cofactor>
    <text evidence="2">Binds 1 divalent metal cation per subunit. Active with Fe(2+), and probably also with Mn(2+), Zn(2+) and Co(2+).</text>
</comment>
<comment type="pathway">
    <text evidence="2">Carbohydrate degradation.</text>
</comment>
<comment type="subunit">
    <text evidence="2">Homodimer.</text>
</comment>
<comment type="miscellaneous">
    <text evidence="4">According to some authors, RPEL1 is a RPE retrogene on chromosome 2 which is likely to be functional.</text>
</comment>
<comment type="similarity">
    <text evidence="3">Belongs to the ribulose-phosphate 3-epimerase family.</text>
</comment>
<feature type="chain" id="PRO_0000425564" description="Ribulose-phosphate 3-epimerase-like protein 1">
    <location>
        <begin position="1"/>
        <end position="228"/>
    </location>
</feature>
<feature type="active site" description="Proton acceptor" evidence="1">
    <location>
        <position position="37"/>
    </location>
</feature>
<feature type="active site" description="Proton donor" evidence="1">
    <location>
        <position position="175"/>
    </location>
</feature>
<feature type="binding site" evidence="1">
    <location>
        <position position="10"/>
    </location>
    <ligand>
        <name>substrate</name>
    </ligand>
</feature>
<feature type="binding site" evidence="1">
    <location>
        <position position="35"/>
    </location>
    <ligand>
        <name>a divalent metal cation</name>
        <dbReference type="ChEBI" id="CHEBI:60240"/>
    </ligand>
</feature>
<feature type="binding site" evidence="1">
    <location>
        <position position="37"/>
    </location>
    <ligand>
        <name>a divalent metal cation</name>
        <dbReference type="ChEBI" id="CHEBI:60240"/>
    </ligand>
</feature>
<feature type="binding site" evidence="1">
    <location>
        <position position="70"/>
    </location>
    <ligand>
        <name>a divalent metal cation</name>
        <dbReference type="ChEBI" id="CHEBI:60240"/>
    </ligand>
</feature>
<feature type="binding site" evidence="1">
    <location>
        <position position="70"/>
    </location>
    <ligand>
        <name>substrate</name>
    </ligand>
</feature>
<feature type="binding site" evidence="1">
    <location>
        <begin position="146"/>
        <end position="149"/>
    </location>
    <ligand>
        <name>substrate</name>
    </ligand>
</feature>
<feature type="binding site" evidence="1">
    <location>
        <begin position="175"/>
        <end position="177"/>
    </location>
    <ligand>
        <name>substrate</name>
    </ligand>
</feature>
<feature type="binding site" evidence="1">
    <location>
        <position position="175"/>
    </location>
    <ligand>
        <name>a divalent metal cation</name>
        <dbReference type="ChEBI" id="CHEBI:60240"/>
    </ligand>
</feature>
<feature type="binding site" evidence="1">
    <location>
        <begin position="197"/>
        <end position="198"/>
    </location>
    <ligand>
        <name>substrate</name>
    </ligand>
</feature>
<reference key="1">
    <citation type="journal article" date="2005" name="PLoS Biol.">
        <title>Emergence of young human genes after a burst of retroposition in primates.</title>
        <authorList>
            <person name="Marques A.C."/>
            <person name="Dupanloup I."/>
            <person name="Vinckenbosch N."/>
            <person name="Reymond A."/>
            <person name="Kaessmann H."/>
        </authorList>
    </citation>
    <scope>NUCLEOTIDE SEQUENCE [GENOMIC DNA]</scope>
</reference>
<reference key="2">
    <citation type="journal article" date="2004" name="Nature">
        <title>The DNA sequence and comparative analysis of human chromosome 10.</title>
        <authorList>
            <person name="Deloukas P."/>
            <person name="Earthrowl M.E."/>
            <person name="Grafham D.V."/>
            <person name="Rubenfield M."/>
            <person name="French L."/>
            <person name="Steward C.A."/>
            <person name="Sims S.K."/>
            <person name="Jones M.C."/>
            <person name="Searle S."/>
            <person name="Scott C."/>
            <person name="Howe K."/>
            <person name="Hunt S.E."/>
            <person name="Andrews T.D."/>
            <person name="Gilbert J.G.R."/>
            <person name="Swarbreck D."/>
            <person name="Ashurst J.L."/>
            <person name="Taylor A."/>
            <person name="Battles J."/>
            <person name="Bird C.P."/>
            <person name="Ainscough R."/>
            <person name="Almeida J.P."/>
            <person name="Ashwell R.I.S."/>
            <person name="Ambrose K.D."/>
            <person name="Babbage A.K."/>
            <person name="Bagguley C.L."/>
            <person name="Bailey J."/>
            <person name="Banerjee R."/>
            <person name="Bates K."/>
            <person name="Beasley H."/>
            <person name="Bray-Allen S."/>
            <person name="Brown A.J."/>
            <person name="Brown J.Y."/>
            <person name="Burford D.C."/>
            <person name="Burrill W."/>
            <person name="Burton J."/>
            <person name="Cahill P."/>
            <person name="Camire D."/>
            <person name="Carter N.P."/>
            <person name="Chapman J.C."/>
            <person name="Clark S.Y."/>
            <person name="Clarke G."/>
            <person name="Clee C.M."/>
            <person name="Clegg S."/>
            <person name="Corby N."/>
            <person name="Coulson A."/>
            <person name="Dhami P."/>
            <person name="Dutta I."/>
            <person name="Dunn M."/>
            <person name="Faulkner L."/>
            <person name="Frankish A."/>
            <person name="Frankland J.A."/>
            <person name="Garner P."/>
            <person name="Garnett J."/>
            <person name="Gribble S."/>
            <person name="Griffiths C."/>
            <person name="Grocock R."/>
            <person name="Gustafson E."/>
            <person name="Hammond S."/>
            <person name="Harley J.L."/>
            <person name="Hart E."/>
            <person name="Heath P.D."/>
            <person name="Ho T.P."/>
            <person name="Hopkins B."/>
            <person name="Horne J."/>
            <person name="Howden P.J."/>
            <person name="Huckle E."/>
            <person name="Hynds C."/>
            <person name="Johnson C."/>
            <person name="Johnson D."/>
            <person name="Kana A."/>
            <person name="Kay M."/>
            <person name="Kimberley A.M."/>
            <person name="Kershaw J.K."/>
            <person name="Kokkinaki M."/>
            <person name="Laird G.K."/>
            <person name="Lawlor S."/>
            <person name="Lee H.M."/>
            <person name="Leongamornlert D.A."/>
            <person name="Laird G."/>
            <person name="Lloyd C."/>
            <person name="Lloyd D.M."/>
            <person name="Loveland J."/>
            <person name="Lovell J."/>
            <person name="McLaren S."/>
            <person name="McLay K.E."/>
            <person name="McMurray A."/>
            <person name="Mashreghi-Mohammadi M."/>
            <person name="Matthews L."/>
            <person name="Milne S."/>
            <person name="Nickerson T."/>
            <person name="Nguyen M."/>
            <person name="Overton-Larty E."/>
            <person name="Palmer S.A."/>
            <person name="Pearce A.V."/>
            <person name="Peck A.I."/>
            <person name="Pelan S."/>
            <person name="Phillimore B."/>
            <person name="Porter K."/>
            <person name="Rice C.M."/>
            <person name="Rogosin A."/>
            <person name="Ross M.T."/>
            <person name="Sarafidou T."/>
            <person name="Sehra H.K."/>
            <person name="Shownkeen R."/>
            <person name="Skuce C.D."/>
            <person name="Smith M."/>
            <person name="Standring L."/>
            <person name="Sycamore N."/>
            <person name="Tester J."/>
            <person name="Thorpe A."/>
            <person name="Torcasso W."/>
            <person name="Tracey A."/>
            <person name="Tromans A."/>
            <person name="Tsolas J."/>
            <person name="Wall M."/>
            <person name="Walsh J."/>
            <person name="Wang H."/>
            <person name="Weinstock K."/>
            <person name="West A.P."/>
            <person name="Willey D.L."/>
            <person name="Whitehead S.L."/>
            <person name="Wilming L."/>
            <person name="Wray P.W."/>
            <person name="Young L."/>
            <person name="Chen Y."/>
            <person name="Lovering R.C."/>
            <person name="Moschonas N.K."/>
            <person name="Siebert R."/>
            <person name="Fechtel K."/>
            <person name="Bentley D."/>
            <person name="Durbin R.M."/>
            <person name="Hubbard T."/>
            <person name="Doucette-Stamm L."/>
            <person name="Beck S."/>
            <person name="Smith D.R."/>
            <person name="Rogers J."/>
        </authorList>
    </citation>
    <scope>NUCLEOTIDE SEQUENCE [LARGE SCALE GENOMIC DNA]</scope>
</reference>
<reference key="3">
    <citation type="submission" date="2005-09" db="EMBL/GenBank/DDBJ databases">
        <authorList>
            <person name="Mural R.J."/>
            <person name="Istrail S."/>
            <person name="Sutton G.G."/>
            <person name="Florea L."/>
            <person name="Halpern A.L."/>
            <person name="Mobarry C.M."/>
            <person name="Lippert R."/>
            <person name="Walenz B."/>
            <person name="Shatkay H."/>
            <person name="Dew I."/>
            <person name="Miller J.R."/>
            <person name="Flanigan M.J."/>
            <person name="Edwards N.J."/>
            <person name="Bolanos R."/>
            <person name="Fasulo D."/>
            <person name="Halldorsson B.V."/>
            <person name="Hannenhalli S."/>
            <person name="Turner R."/>
            <person name="Yooseph S."/>
            <person name="Lu F."/>
            <person name="Nusskern D.R."/>
            <person name="Shue B.C."/>
            <person name="Zheng X.H."/>
            <person name="Zhong F."/>
            <person name="Delcher A.L."/>
            <person name="Huson D.H."/>
            <person name="Kravitz S.A."/>
            <person name="Mouchard L."/>
            <person name="Reinert K."/>
            <person name="Remington K.A."/>
            <person name="Clark A.G."/>
            <person name="Waterman M.S."/>
            <person name="Eichler E.E."/>
            <person name="Adams M.D."/>
            <person name="Hunkapiller M.W."/>
            <person name="Myers E.W."/>
            <person name="Venter J.C."/>
        </authorList>
    </citation>
    <scope>NUCLEOTIDE SEQUENCE [LARGE SCALE GENOMIC DNA]</scope>
</reference>
<reference key="4">
    <citation type="journal article" date="2004" name="Genome Res.">
        <title>The status, quality, and expansion of the NIH full-length cDNA project: the Mammalian Gene Collection (MGC).</title>
        <authorList>
            <consortium name="The MGC Project Team"/>
        </authorList>
    </citation>
    <scope>NUCLEOTIDE SEQUENCE [LARGE SCALE MRNA]</scope>
    <source>
        <tissue>Brain</tissue>
    </source>
</reference>
<proteinExistence type="evidence at protein level"/>
<gene>
    <name type="primary">RPEL1</name>
</gene>